<comment type="function">
    <text evidence="1">Cytochrome bo(3) ubiquinol terminal oxidase is the component of the aerobic respiratory chain of E.coli that predominates when cells are grown at high aeration. Has proton pump activity across the membrane in addition to electron transfer, pumping 2 protons/electron (By similarity).</text>
</comment>
<comment type="subunit">
    <text evidence="1">Heterooctamer of two A chains, two B chains, two C chains and two D chains.</text>
</comment>
<comment type="subcellular location">
    <subcellularLocation>
        <location evidence="1">Cell inner membrane</location>
        <topology evidence="1">Multi-pass membrane protein</topology>
    </subcellularLocation>
</comment>
<comment type="similarity">
    <text evidence="5">Belongs to the cytochrome c oxidase subunit 2 family.</text>
</comment>
<accession>Q9WWR1</accession>
<gene>
    <name type="primary">cyoA</name>
</gene>
<evidence type="ECO:0000250" key="1"/>
<evidence type="ECO:0000255" key="2"/>
<evidence type="ECO:0000255" key="3">
    <source>
        <dbReference type="PROSITE-ProRule" id="PRU00303"/>
    </source>
</evidence>
<evidence type="ECO:0000256" key="4">
    <source>
        <dbReference type="SAM" id="MobiDB-lite"/>
    </source>
</evidence>
<evidence type="ECO:0000305" key="5"/>
<reference key="1">
    <citation type="journal article" date="1998" name="FEMS Microbiol. Lett.">
        <title>Isolation and characterization of toluene-sensitive mutants from Pseudomonas putida IH-2000.</title>
        <authorList>
            <person name="Hirayama H."/>
            <person name="Takami H."/>
            <person name="Inoue A."/>
            <person name="Horikoshi K."/>
        </authorList>
    </citation>
    <scope>NUCLEOTIDE SEQUENCE [GENOMIC DNA]</scope>
    <source>
        <strain>IH-2000</strain>
    </source>
</reference>
<organism>
    <name type="scientific">Pseudomonas putida</name>
    <name type="common">Arthrobacter siderocapsulatus</name>
    <dbReference type="NCBI Taxonomy" id="303"/>
    <lineage>
        <taxon>Bacteria</taxon>
        <taxon>Pseudomonadati</taxon>
        <taxon>Pseudomonadota</taxon>
        <taxon>Gammaproteobacteria</taxon>
        <taxon>Pseudomonadales</taxon>
        <taxon>Pseudomonadaceae</taxon>
        <taxon>Pseudomonas</taxon>
    </lineage>
</organism>
<protein>
    <recommendedName>
        <fullName>Cytochrome bo(3) ubiquinol oxidase subunit 2</fullName>
    </recommendedName>
    <alternativeName>
        <fullName>Cytochrome o ubiquinol oxidase subunit 2</fullName>
        <shortName>Cytochrome o subunit 2</shortName>
    </alternativeName>
    <alternativeName>
        <fullName>Oxidase bo(3) subunit 2</fullName>
    </alternativeName>
    <alternativeName>
        <fullName>Ubiquinol oxidase polypeptide II</fullName>
    </alternativeName>
    <alternativeName>
        <fullName>Ubiquinol oxidase subunit 2</fullName>
    </alternativeName>
</protein>
<keyword id="KW-0997">Cell inner membrane</keyword>
<keyword id="KW-1003">Cell membrane</keyword>
<keyword id="KW-0249">Electron transport</keyword>
<keyword id="KW-0449">Lipoprotein</keyword>
<keyword id="KW-0472">Membrane</keyword>
<keyword id="KW-0560">Oxidoreductase</keyword>
<keyword id="KW-0564">Palmitate</keyword>
<keyword id="KW-0679">Respiratory chain</keyword>
<keyword id="KW-0732">Signal</keyword>
<keyword id="KW-0812">Transmembrane</keyword>
<keyword id="KW-1133">Transmembrane helix</keyword>
<keyword id="KW-0813">Transport</keyword>
<sequence length="314" mass="34702">MSKKRYPRLFGILPFLGMLLLSGCNWTLLDPKGQVGIEQKNLILIATGLMLLVVIPVIIMTVVFAWKYRASNKAATYTPDWSHSTKIEAAVWIIPILIIIALGYFTYHSTHKLDPYRPLDSDVKPVQIDVVALDWKWLFIYPEQGIATVNKIVFPANTPVNFRVTSDAVMNSFFIPGLGGQIYAMAGMTTKLHLIANENGEFDGISANYSGAGFTGMKFKATATSQEDFDKWVAEVKQSPKKLDKAEYEALAKPSENNPVALYSEASPDQFQLIVDKYEGMNRGRPSHEEAGSKDLATTKGVESSMQPAAGAEE</sequence>
<name>CYOA_PSEPU</name>
<dbReference type="EMBL" id="AB016787">
    <property type="protein sequence ID" value="BAA76356.1"/>
    <property type="molecule type" value="Genomic_DNA"/>
</dbReference>
<dbReference type="RefSeq" id="WP_046616069.1">
    <property type="nucleotide sequence ID" value="NZ_JAPYLM010000001.1"/>
</dbReference>
<dbReference type="SMR" id="Q9WWR1"/>
<dbReference type="eggNOG" id="COG1622">
    <property type="taxonomic scope" value="Bacteria"/>
</dbReference>
<dbReference type="GO" id="GO:0005886">
    <property type="term" value="C:plasma membrane"/>
    <property type="evidence" value="ECO:0007669"/>
    <property type="project" value="UniProtKB-SubCell"/>
</dbReference>
<dbReference type="GO" id="GO:0005507">
    <property type="term" value="F:copper ion binding"/>
    <property type="evidence" value="ECO:0007669"/>
    <property type="project" value="InterPro"/>
</dbReference>
<dbReference type="GO" id="GO:0009486">
    <property type="term" value="F:cytochrome bo3 ubiquinol oxidase activity"/>
    <property type="evidence" value="ECO:0007669"/>
    <property type="project" value="InterPro"/>
</dbReference>
<dbReference type="GO" id="GO:0004129">
    <property type="term" value="F:cytochrome-c oxidase activity"/>
    <property type="evidence" value="ECO:0007669"/>
    <property type="project" value="InterPro"/>
</dbReference>
<dbReference type="GO" id="GO:0016682">
    <property type="term" value="F:oxidoreductase activity, acting on diphenols and related substances as donors, oxygen as acceptor"/>
    <property type="evidence" value="ECO:0007669"/>
    <property type="project" value="InterPro"/>
</dbReference>
<dbReference type="GO" id="GO:0042773">
    <property type="term" value="P:ATP synthesis coupled electron transport"/>
    <property type="evidence" value="ECO:0007669"/>
    <property type="project" value="TreeGrafter"/>
</dbReference>
<dbReference type="CDD" id="cd04212">
    <property type="entry name" value="CuRO_UO_II"/>
    <property type="match status" value="1"/>
</dbReference>
<dbReference type="FunFam" id="1.10.287.90:FF:000002">
    <property type="entry name" value="Ubiquinol oxidase subunit 2"/>
    <property type="match status" value="1"/>
</dbReference>
<dbReference type="FunFam" id="2.60.40.420:FF:000008">
    <property type="entry name" value="Ubiquinol oxidase subunit 2"/>
    <property type="match status" value="1"/>
</dbReference>
<dbReference type="Gene3D" id="1.10.287.90">
    <property type="match status" value="1"/>
</dbReference>
<dbReference type="Gene3D" id="2.60.40.420">
    <property type="entry name" value="Cupredoxins - blue copper proteins"/>
    <property type="match status" value="1"/>
</dbReference>
<dbReference type="InterPro" id="IPR045187">
    <property type="entry name" value="CcO_II"/>
</dbReference>
<dbReference type="InterPro" id="IPR002429">
    <property type="entry name" value="CcO_II-like_C"/>
</dbReference>
<dbReference type="InterPro" id="IPR010514">
    <property type="entry name" value="COX_ARM"/>
</dbReference>
<dbReference type="InterPro" id="IPR008972">
    <property type="entry name" value="Cupredoxin"/>
</dbReference>
<dbReference type="InterPro" id="IPR034227">
    <property type="entry name" value="CuRO_UO_II"/>
</dbReference>
<dbReference type="InterPro" id="IPR011759">
    <property type="entry name" value="Cyt_c_oxidase_su2_TM_dom"/>
</dbReference>
<dbReference type="InterPro" id="IPR036257">
    <property type="entry name" value="Cyt_c_oxidase_su2_TM_sf"/>
</dbReference>
<dbReference type="InterPro" id="IPR006333">
    <property type="entry name" value="Cyt_o_ubiquinol_oxidase_su2"/>
</dbReference>
<dbReference type="NCBIfam" id="TIGR01433">
    <property type="entry name" value="CyoA"/>
    <property type="match status" value="1"/>
</dbReference>
<dbReference type="PANTHER" id="PTHR22888:SF18">
    <property type="entry name" value="CYTOCHROME BO(3) UBIQUINOL OXIDASE SUBUNIT 2"/>
    <property type="match status" value="1"/>
</dbReference>
<dbReference type="PANTHER" id="PTHR22888">
    <property type="entry name" value="CYTOCHROME C OXIDASE, SUBUNIT II"/>
    <property type="match status" value="1"/>
</dbReference>
<dbReference type="Pfam" id="PF00116">
    <property type="entry name" value="COX2"/>
    <property type="match status" value="1"/>
</dbReference>
<dbReference type="Pfam" id="PF06481">
    <property type="entry name" value="COX_ARM"/>
    <property type="match status" value="1"/>
</dbReference>
<dbReference type="PIRSF" id="PIRSF000292">
    <property type="entry name" value="Ubi_od_II"/>
    <property type="match status" value="1"/>
</dbReference>
<dbReference type="SUPFAM" id="SSF49503">
    <property type="entry name" value="Cupredoxins"/>
    <property type="match status" value="1"/>
</dbReference>
<dbReference type="SUPFAM" id="SSF81464">
    <property type="entry name" value="Cytochrome c oxidase subunit II-like, transmembrane region"/>
    <property type="match status" value="1"/>
</dbReference>
<dbReference type="PROSITE" id="PS50857">
    <property type="entry name" value="COX2_CUA"/>
    <property type="match status" value="1"/>
</dbReference>
<dbReference type="PROSITE" id="PS50999">
    <property type="entry name" value="COX2_TM"/>
    <property type="match status" value="1"/>
</dbReference>
<dbReference type="PROSITE" id="PS51257">
    <property type="entry name" value="PROKAR_LIPOPROTEIN"/>
    <property type="match status" value="1"/>
</dbReference>
<feature type="signal peptide" evidence="3">
    <location>
        <begin position="1"/>
        <end position="23"/>
    </location>
</feature>
<feature type="chain" id="PRO_0000006075" description="Cytochrome bo(3) ubiquinol oxidase subunit 2">
    <location>
        <begin position="24"/>
        <end position="314"/>
    </location>
</feature>
<feature type="topological domain" description="Periplasmic" evidence="2">
    <location>
        <begin position="24"/>
        <end position="42"/>
    </location>
</feature>
<feature type="transmembrane region" description="Helical" evidence="2">
    <location>
        <begin position="43"/>
        <end position="63"/>
    </location>
</feature>
<feature type="topological domain" description="Cytoplasmic" evidence="2">
    <location>
        <begin position="64"/>
        <end position="86"/>
    </location>
</feature>
<feature type="transmembrane region" description="Helical" evidence="2">
    <location>
        <begin position="87"/>
        <end position="107"/>
    </location>
</feature>
<feature type="topological domain" description="Periplasmic" evidence="2">
    <location>
        <begin position="108"/>
        <end position="314"/>
    </location>
</feature>
<feature type="region of interest" description="Disordered" evidence="4">
    <location>
        <begin position="278"/>
        <end position="314"/>
    </location>
</feature>
<feature type="compositionally biased region" description="Basic and acidic residues" evidence="4">
    <location>
        <begin position="278"/>
        <end position="293"/>
    </location>
</feature>
<feature type="lipid moiety-binding region" description="N-palmitoyl cysteine" evidence="3">
    <location>
        <position position="24"/>
    </location>
</feature>
<feature type="lipid moiety-binding region" description="S-diacylglycerol cysteine" evidence="3">
    <location>
        <position position="24"/>
    </location>
</feature>
<proteinExistence type="inferred from homology"/>